<feature type="chain" id="PRO_0000275833" description="Taurine import ATP-binding protein TauB">
    <location>
        <begin position="1"/>
        <end position="263"/>
    </location>
</feature>
<feature type="domain" description="ABC transporter" evidence="1">
    <location>
        <begin position="4"/>
        <end position="235"/>
    </location>
</feature>
<feature type="binding site" evidence="1">
    <location>
        <begin position="40"/>
        <end position="47"/>
    </location>
    <ligand>
        <name>ATP</name>
        <dbReference type="ChEBI" id="CHEBI:30616"/>
    </ligand>
</feature>
<reference key="1">
    <citation type="journal article" date="2006" name="Genome Biol.">
        <title>Genomic analysis reveals that Pseudomonas aeruginosa virulence is combinatorial.</title>
        <authorList>
            <person name="Lee D.G."/>
            <person name="Urbach J.M."/>
            <person name="Wu G."/>
            <person name="Liberati N.T."/>
            <person name="Feinbaum R.L."/>
            <person name="Miyata S."/>
            <person name="Diggins L.T."/>
            <person name="He J."/>
            <person name="Saucier M."/>
            <person name="Deziel E."/>
            <person name="Friedman L."/>
            <person name="Li L."/>
            <person name="Grills G."/>
            <person name="Montgomery K."/>
            <person name="Kucherlapati R."/>
            <person name="Rahme L.G."/>
            <person name="Ausubel F.M."/>
        </authorList>
    </citation>
    <scope>NUCLEOTIDE SEQUENCE [LARGE SCALE GENOMIC DNA]</scope>
    <source>
        <strain>UCBPP-PA14</strain>
    </source>
</reference>
<protein>
    <recommendedName>
        <fullName evidence="1">Taurine import ATP-binding protein TauB</fullName>
        <ecNumber evidence="1">7.6.2.7</ecNumber>
    </recommendedName>
</protein>
<evidence type="ECO:0000255" key="1">
    <source>
        <dbReference type="HAMAP-Rule" id="MF_01714"/>
    </source>
</evidence>
<accession>Q02SA6</accession>
<gene>
    <name evidence="1" type="primary">tauB</name>
    <name type="ordered locus">PA14_12940</name>
</gene>
<organism>
    <name type="scientific">Pseudomonas aeruginosa (strain UCBPP-PA14)</name>
    <dbReference type="NCBI Taxonomy" id="208963"/>
    <lineage>
        <taxon>Bacteria</taxon>
        <taxon>Pseudomonadati</taxon>
        <taxon>Pseudomonadota</taxon>
        <taxon>Gammaproteobacteria</taxon>
        <taxon>Pseudomonadales</taxon>
        <taxon>Pseudomonadaceae</taxon>
        <taxon>Pseudomonas</taxon>
    </lineage>
</organism>
<keyword id="KW-0067">ATP-binding</keyword>
<keyword id="KW-0997">Cell inner membrane</keyword>
<keyword id="KW-1003">Cell membrane</keyword>
<keyword id="KW-0472">Membrane</keyword>
<keyword id="KW-0547">Nucleotide-binding</keyword>
<keyword id="KW-1278">Translocase</keyword>
<keyword id="KW-0813">Transport</keyword>
<dbReference type="EC" id="7.6.2.7" evidence="1"/>
<dbReference type="EMBL" id="CP000438">
    <property type="protein sequence ID" value="ABJ13213.1"/>
    <property type="molecule type" value="Genomic_DNA"/>
</dbReference>
<dbReference type="RefSeq" id="WP_003137728.1">
    <property type="nucleotide sequence ID" value="NZ_CP034244.1"/>
</dbReference>
<dbReference type="SMR" id="Q02SA6"/>
<dbReference type="KEGG" id="pau:PA14_12940"/>
<dbReference type="PseudoCAP" id="PA14_12940"/>
<dbReference type="HOGENOM" id="CLU_000604_1_22_6"/>
<dbReference type="BioCyc" id="PAER208963:G1G74-1069-MONOMER"/>
<dbReference type="Proteomes" id="UP000000653">
    <property type="component" value="Chromosome"/>
</dbReference>
<dbReference type="GO" id="GO:0005886">
    <property type="term" value="C:plasma membrane"/>
    <property type="evidence" value="ECO:0007669"/>
    <property type="project" value="UniProtKB-SubCell"/>
</dbReference>
<dbReference type="GO" id="GO:0015411">
    <property type="term" value="F:ABC-type taurine transporter transporter activity"/>
    <property type="evidence" value="ECO:0007669"/>
    <property type="project" value="UniProtKB-EC"/>
</dbReference>
<dbReference type="GO" id="GO:0005524">
    <property type="term" value="F:ATP binding"/>
    <property type="evidence" value="ECO:0007669"/>
    <property type="project" value="UniProtKB-KW"/>
</dbReference>
<dbReference type="GO" id="GO:0016887">
    <property type="term" value="F:ATP hydrolysis activity"/>
    <property type="evidence" value="ECO:0007669"/>
    <property type="project" value="InterPro"/>
</dbReference>
<dbReference type="CDD" id="cd03293">
    <property type="entry name" value="ABC_NrtD_SsuB_transporters"/>
    <property type="match status" value="1"/>
</dbReference>
<dbReference type="Gene3D" id="3.40.50.300">
    <property type="entry name" value="P-loop containing nucleotide triphosphate hydrolases"/>
    <property type="match status" value="1"/>
</dbReference>
<dbReference type="InterPro" id="IPR003593">
    <property type="entry name" value="AAA+_ATPase"/>
</dbReference>
<dbReference type="InterPro" id="IPR003439">
    <property type="entry name" value="ABC_transporter-like_ATP-bd"/>
</dbReference>
<dbReference type="InterPro" id="IPR017871">
    <property type="entry name" value="ABC_transporter-like_CS"/>
</dbReference>
<dbReference type="InterPro" id="IPR050166">
    <property type="entry name" value="ABC_transporter_ATP-bind"/>
</dbReference>
<dbReference type="InterPro" id="IPR027417">
    <property type="entry name" value="P-loop_NTPase"/>
</dbReference>
<dbReference type="PANTHER" id="PTHR42788:SF18">
    <property type="entry name" value="TAURINE IMPORT ATP-BINDING PROTEIN TAUB"/>
    <property type="match status" value="1"/>
</dbReference>
<dbReference type="PANTHER" id="PTHR42788">
    <property type="entry name" value="TAURINE IMPORT ATP-BINDING PROTEIN-RELATED"/>
    <property type="match status" value="1"/>
</dbReference>
<dbReference type="Pfam" id="PF00005">
    <property type="entry name" value="ABC_tran"/>
    <property type="match status" value="1"/>
</dbReference>
<dbReference type="SMART" id="SM00382">
    <property type="entry name" value="AAA"/>
    <property type="match status" value="1"/>
</dbReference>
<dbReference type="SUPFAM" id="SSF52540">
    <property type="entry name" value="P-loop containing nucleoside triphosphate hydrolases"/>
    <property type="match status" value="1"/>
</dbReference>
<dbReference type="PROSITE" id="PS00211">
    <property type="entry name" value="ABC_TRANSPORTER_1"/>
    <property type="match status" value="1"/>
</dbReference>
<dbReference type="PROSITE" id="PS50893">
    <property type="entry name" value="ABC_TRANSPORTER_2"/>
    <property type="match status" value="1"/>
</dbReference>
<dbReference type="PROSITE" id="PS51250">
    <property type="entry name" value="TAUB"/>
    <property type="match status" value="1"/>
</dbReference>
<sequence>MSRLTAEAISLSFEQRGQRRAILRDLSLGLAKGESLVVLGPSGCGKSTLLNILAGFQTPDQGRVQIDGRTLEGPGGERGVVFQDDALMPWLNALDNVALGLRIRGLGKAERTARARQVLQLVGLQEYAEQSVAELSGGQRQRLGLARALAVEPDFLLLDEPFGALDALTRERMQVLLLDLWKQTGKGLFLITHSVDEALFLATDLVVMDGPPARIVKRLPVDFARRYAAGETVRSIKSDPEFGRLRQALLDEFLDVAEAEHAH</sequence>
<comment type="function">
    <text evidence="1">Part of the ABC transporter complex TauABC involved in taurine import. Responsible for energy coupling to the transport system.</text>
</comment>
<comment type="catalytic activity">
    <reaction evidence="1">
        <text>taurine(out) + ATP + H2O = taurine(in) + ADP + phosphate + H(+)</text>
        <dbReference type="Rhea" id="RHEA:14613"/>
        <dbReference type="ChEBI" id="CHEBI:15377"/>
        <dbReference type="ChEBI" id="CHEBI:15378"/>
        <dbReference type="ChEBI" id="CHEBI:30616"/>
        <dbReference type="ChEBI" id="CHEBI:43474"/>
        <dbReference type="ChEBI" id="CHEBI:456216"/>
        <dbReference type="ChEBI" id="CHEBI:507393"/>
        <dbReference type="EC" id="7.6.2.7"/>
    </reaction>
</comment>
<comment type="subunit">
    <text evidence="1">The complex is composed of two ATP-binding proteins (TauB), two transmembrane proteins (TauC) and a solute-binding protein (TauA).</text>
</comment>
<comment type="subcellular location">
    <subcellularLocation>
        <location evidence="1">Cell inner membrane</location>
        <topology evidence="1">Peripheral membrane protein</topology>
    </subcellularLocation>
</comment>
<comment type="similarity">
    <text evidence="1">Belongs to the ABC transporter superfamily. Taurine importer (TC 3.A.1.17.1) family.</text>
</comment>
<name>TAUB_PSEAB</name>
<proteinExistence type="inferred from homology"/>